<gene>
    <name evidence="1" type="primary">rplQ</name>
    <name type="ordered locus">Bphyt_3617</name>
</gene>
<protein>
    <recommendedName>
        <fullName evidence="1">Large ribosomal subunit protein bL17</fullName>
    </recommendedName>
    <alternativeName>
        <fullName evidence="2">50S ribosomal protein L17</fullName>
    </alternativeName>
</protein>
<feature type="chain" id="PRO_1000144392" description="Large ribosomal subunit protein bL17">
    <location>
        <begin position="1"/>
        <end position="130"/>
    </location>
</feature>
<accession>B2T724</accession>
<sequence length="130" mass="14995">MRHRHGLRKLNRTSSHRLAMLRNMSNSLIEHEVIKTTLPKAKELRKVVEPLITLGKKPSLANRRLAFNRLRDRDSVTKLFEVLGPRYATRPGGYLRVLKFGFRVGDNAPMALVELLDRPEVEEVEVQEAE</sequence>
<evidence type="ECO:0000255" key="1">
    <source>
        <dbReference type="HAMAP-Rule" id="MF_01368"/>
    </source>
</evidence>
<evidence type="ECO:0000305" key="2"/>
<comment type="subunit">
    <text evidence="1">Part of the 50S ribosomal subunit. Contacts protein L32.</text>
</comment>
<comment type="similarity">
    <text evidence="1">Belongs to the bacterial ribosomal protein bL17 family.</text>
</comment>
<organism>
    <name type="scientific">Paraburkholderia phytofirmans (strain DSM 17436 / LMG 22146 / PsJN)</name>
    <name type="common">Burkholderia phytofirmans</name>
    <dbReference type="NCBI Taxonomy" id="398527"/>
    <lineage>
        <taxon>Bacteria</taxon>
        <taxon>Pseudomonadati</taxon>
        <taxon>Pseudomonadota</taxon>
        <taxon>Betaproteobacteria</taxon>
        <taxon>Burkholderiales</taxon>
        <taxon>Burkholderiaceae</taxon>
        <taxon>Paraburkholderia</taxon>
    </lineage>
</organism>
<reference key="1">
    <citation type="journal article" date="2011" name="J. Bacteriol.">
        <title>Complete genome sequence of the plant growth-promoting endophyte Burkholderia phytofirmans strain PsJN.</title>
        <authorList>
            <person name="Weilharter A."/>
            <person name="Mitter B."/>
            <person name="Shin M.V."/>
            <person name="Chain P.S."/>
            <person name="Nowak J."/>
            <person name="Sessitsch A."/>
        </authorList>
    </citation>
    <scope>NUCLEOTIDE SEQUENCE [LARGE SCALE GENOMIC DNA]</scope>
    <source>
        <strain>DSM 17436 / LMG 22146 / PsJN</strain>
    </source>
</reference>
<keyword id="KW-0687">Ribonucleoprotein</keyword>
<keyword id="KW-0689">Ribosomal protein</keyword>
<name>RL17_PARPJ</name>
<dbReference type="EMBL" id="CP001052">
    <property type="protein sequence ID" value="ACD18007.1"/>
    <property type="molecule type" value="Genomic_DNA"/>
</dbReference>
<dbReference type="RefSeq" id="WP_006052227.1">
    <property type="nucleotide sequence ID" value="NC_010681.1"/>
</dbReference>
<dbReference type="SMR" id="B2T724"/>
<dbReference type="STRING" id="398527.Bphyt_3617"/>
<dbReference type="GeneID" id="97311019"/>
<dbReference type="KEGG" id="bpy:Bphyt_3617"/>
<dbReference type="eggNOG" id="COG0203">
    <property type="taxonomic scope" value="Bacteria"/>
</dbReference>
<dbReference type="HOGENOM" id="CLU_074407_2_0_4"/>
<dbReference type="OrthoDB" id="9809073at2"/>
<dbReference type="Proteomes" id="UP000001739">
    <property type="component" value="Chromosome 1"/>
</dbReference>
<dbReference type="GO" id="GO:0022625">
    <property type="term" value="C:cytosolic large ribosomal subunit"/>
    <property type="evidence" value="ECO:0007669"/>
    <property type="project" value="TreeGrafter"/>
</dbReference>
<dbReference type="GO" id="GO:0003735">
    <property type="term" value="F:structural constituent of ribosome"/>
    <property type="evidence" value="ECO:0007669"/>
    <property type="project" value="InterPro"/>
</dbReference>
<dbReference type="GO" id="GO:0006412">
    <property type="term" value="P:translation"/>
    <property type="evidence" value="ECO:0007669"/>
    <property type="project" value="UniProtKB-UniRule"/>
</dbReference>
<dbReference type="FunFam" id="3.90.1030.10:FF:000001">
    <property type="entry name" value="50S ribosomal protein L17"/>
    <property type="match status" value="1"/>
</dbReference>
<dbReference type="Gene3D" id="3.90.1030.10">
    <property type="entry name" value="Ribosomal protein L17"/>
    <property type="match status" value="1"/>
</dbReference>
<dbReference type="HAMAP" id="MF_01368">
    <property type="entry name" value="Ribosomal_bL17"/>
    <property type="match status" value="1"/>
</dbReference>
<dbReference type="InterPro" id="IPR000456">
    <property type="entry name" value="Ribosomal_bL17"/>
</dbReference>
<dbReference type="InterPro" id="IPR047859">
    <property type="entry name" value="Ribosomal_bL17_CS"/>
</dbReference>
<dbReference type="InterPro" id="IPR036373">
    <property type="entry name" value="Ribosomal_bL17_sf"/>
</dbReference>
<dbReference type="NCBIfam" id="TIGR00059">
    <property type="entry name" value="L17"/>
    <property type="match status" value="1"/>
</dbReference>
<dbReference type="PANTHER" id="PTHR14413:SF16">
    <property type="entry name" value="LARGE RIBOSOMAL SUBUNIT PROTEIN BL17M"/>
    <property type="match status" value="1"/>
</dbReference>
<dbReference type="PANTHER" id="PTHR14413">
    <property type="entry name" value="RIBOSOMAL PROTEIN L17"/>
    <property type="match status" value="1"/>
</dbReference>
<dbReference type="Pfam" id="PF01196">
    <property type="entry name" value="Ribosomal_L17"/>
    <property type="match status" value="1"/>
</dbReference>
<dbReference type="SUPFAM" id="SSF64263">
    <property type="entry name" value="Prokaryotic ribosomal protein L17"/>
    <property type="match status" value="1"/>
</dbReference>
<dbReference type="PROSITE" id="PS01167">
    <property type="entry name" value="RIBOSOMAL_L17"/>
    <property type="match status" value="1"/>
</dbReference>
<proteinExistence type="inferred from homology"/>